<proteinExistence type="inferred from homology"/>
<sequence length="156" mass="16181">MKVLEGGLAAPNAKVAVVVARFNSFINDSLVEGAVDALKRIGQVKDENITLVRVPGAYELPLAVRRLADSKKYDAIVALGTVIRGGTAHFEYVAGGASNGIGHVSLESNVPVAFGVLTTENIEQAIDRAGTKSGNKGAEAALVALEMVNLLAQINA</sequence>
<name>RISB_MANSM</name>
<protein>
    <recommendedName>
        <fullName evidence="1">6,7-dimethyl-8-ribityllumazine synthase</fullName>
        <shortName evidence="1">DMRL synthase</shortName>
        <shortName evidence="1">LS</shortName>
        <shortName evidence="1">Lumazine synthase</shortName>
        <ecNumber evidence="1">2.5.1.78</ecNumber>
    </recommendedName>
</protein>
<dbReference type="EC" id="2.5.1.78" evidence="1"/>
<dbReference type="EMBL" id="AE016827">
    <property type="protein sequence ID" value="AAU37583.1"/>
    <property type="molecule type" value="Genomic_DNA"/>
</dbReference>
<dbReference type="RefSeq" id="WP_011200153.1">
    <property type="nucleotide sequence ID" value="NC_006300.1"/>
</dbReference>
<dbReference type="SMR" id="Q65TX7"/>
<dbReference type="STRING" id="221988.MS0976"/>
<dbReference type="KEGG" id="msu:MS0976"/>
<dbReference type="eggNOG" id="COG0054">
    <property type="taxonomic scope" value="Bacteria"/>
</dbReference>
<dbReference type="HOGENOM" id="CLU_089358_1_1_6"/>
<dbReference type="OrthoDB" id="9809709at2"/>
<dbReference type="UniPathway" id="UPA00275">
    <property type="reaction ID" value="UER00404"/>
</dbReference>
<dbReference type="Proteomes" id="UP000000607">
    <property type="component" value="Chromosome"/>
</dbReference>
<dbReference type="GO" id="GO:0005829">
    <property type="term" value="C:cytosol"/>
    <property type="evidence" value="ECO:0007669"/>
    <property type="project" value="TreeGrafter"/>
</dbReference>
<dbReference type="GO" id="GO:0009349">
    <property type="term" value="C:riboflavin synthase complex"/>
    <property type="evidence" value="ECO:0007669"/>
    <property type="project" value="InterPro"/>
</dbReference>
<dbReference type="GO" id="GO:0000906">
    <property type="term" value="F:6,7-dimethyl-8-ribityllumazine synthase activity"/>
    <property type="evidence" value="ECO:0007669"/>
    <property type="project" value="UniProtKB-UniRule"/>
</dbReference>
<dbReference type="GO" id="GO:0009231">
    <property type="term" value="P:riboflavin biosynthetic process"/>
    <property type="evidence" value="ECO:0007669"/>
    <property type="project" value="UniProtKB-UniRule"/>
</dbReference>
<dbReference type="CDD" id="cd09209">
    <property type="entry name" value="Lumazine_synthase-I"/>
    <property type="match status" value="1"/>
</dbReference>
<dbReference type="FunFam" id="3.40.50.960:FF:000001">
    <property type="entry name" value="6,7-dimethyl-8-ribityllumazine synthase"/>
    <property type="match status" value="1"/>
</dbReference>
<dbReference type="Gene3D" id="3.40.50.960">
    <property type="entry name" value="Lumazine/riboflavin synthase"/>
    <property type="match status" value="1"/>
</dbReference>
<dbReference type="HAMAP" id="MF_00178">
    <property type="entry name" value="Lumazine_synth"/>
    <property type="match status" value="1"/>
</dbReference>
<dbReference type="InterPro" id="IPR034964">
    <property type="entry name" value="LS"/>
</dbReference>
<dbReference type="InterPro" id="IPR002180">
    <property type="entry name" value="LS/RS"/>
</dbReference>
<dbReference type="InterPro" id="IPR036467">
    <property type="entry name" value="LS/RS_sf"/>
</dbReference>
<dbReference type="NCBIfam" id="TIGR00114">
    <property type="entry name" value="lumazine-synth"/>
    <property type="match status" value="1"/>
</dbReference>
<dbReference type="NCBIfam" id="NF000812">
    <property type="entry name" value="PRK00061.1-4"/>
    <property type="match status" value="1"/>
</dbReference>
<dbReference type="PANTHER" id="PTHR21058:SF0">
    <property type="entry name" value="6,7-DIMETHYL-8-RIBITYLLUMAZINE SYNTHASE"/>
    <property type="match status" value="1"/>
</dbReference>
<dbReference type="PANTHER" id="PTHR21058">
    <property type="entry name" value="6,7-DIMETHYL-8-RIBITYLLUMAZINE SYNTHASE DMRL SYNTHASE LUMAZINE SYNTHASE"/>
    <property type="match status" value="1"/>
</dbReference>
<dbReference type="Pfam" id="PF00885">
    <property type="entry name" value="DMRL_synthase"/>
    <property type="match status" value="1"/>
</dbReference>
<dbReference type="SUPFAM" id="SSF52121">
    <property type="entry name" value="Lumazine synthase"/>
    <property type="match status" value="1"/>
</dbReference>
<feature type="chain" id="PRO_1000040444" description="6,7-dimethyl-8-ribityllumazine synthase">
    <location>
        <begin position="1"/>
        <end position="156"/>
    </location>
</feature>
<feature type="active site" description="Proton donor" evidence="1">
    <location>
        <position position="89"/>
    </location>
</feature>
<feature type="binding site" evidence="1">
    <location>
        <position position="22"/>
    </location>
    <ligand>
        <name>5-amino-6-(D-ribitylamino)uracil</name>
        <dbReference type="ChEBI" id="CHEBI:15934"/>
    </ligand>
</feature>
<feature type="binding site" evidence="1">
    <location>
        <begin position="57"/>
        <end position="59"/>
    </location>
    <ligand>
        <name>5-amino-6-(D-ribitylamino)uracil</name>
        <dbReference type="ChEBI" id="CHEBI:15934"/>
    </ligand>
</feature>
<feature type="binding site" evidence="1">
    <location>
        <begin position="81"/>
        <end position="83"/>
    </location>
    <ligand>
        <name>5-amino-6-(D-ribitylamino)uracil</name>
        <dbReference type="ChEBI" id="CHEBI:15934"/>
    </ligand>
</feature>
<feature type="binding site" evidence="1">
    <location>
        <begin position="86"/>
        <end position="87"/>
    </location>
    <ligand>
        <name>(2S)-2-hydroxy-3-oxobutyl phosphate</name>
        <dbReference type="ChEBI" id="CHEBI:58830"/>
    </ligand>
</feature>
<feature type="binding site" evidence="1">
    <location>
        <position position="114"/>
    </location>
    <ligand>
        <name>5-amino-6-(D-ribitylamino)uracil</name>
        <dbReference type="ChEBI" id="CHEBI:15934"/>
    </ligand>
</feature>
<feature type="binding site" evidence="1">
    <location>
        <position position="128"/>
    </location>
    <ligand>
        <name>(2S)-2-hydroxy-3-oxobutyl phosphate</name>
        <dbReference type="ChEBI" id="CHEBI:58830"/>
    </ligand>
</feature>
<keyword id="KW-0686">Riboflavin biosynthesis</keyword>
<keyword id="KW-0808">Transferase</keyword>
<accession>Q65TX7</accession>
<organism>
    <name type="scientific">Mannheimia succiniciproducens (strain KCTC 0769BP / MBEL55E)</name>
    <dbReference type="NCBI Taxonomy" id="221988"/>
    <lineage>
        <taxon>Bacteria</taxon>
        <taxon>Pseudomonadati</taxon>
        <taxon>Pseudomonadota</taxon>
        <taxon>Gammaproteobacteria</taxon>
        <taxon>Pasteurellales</taxon>
        <taxon>Pasteurellaceae</taxon>
        <taxon>Basfia</taxon>
    </lineage>
</organism>
<gene>
    <name evidence="1" type="primary">ribH</name>
    <name type="ordered locus">MS0976</name>
</gene>
<reference key="1">
    <citation type="journal article" date="2004" name="Nat. Biotechnol.">
        <title>The genome sequence of the capnophilic rumen bacterium Mannheimia succiniciproducens.</title>
        <authorList>
            <person name="Hong S.H."/>
            <person name="Kim J.S."/>
            <person name="Lee S.Y."/>
            <person name="In Y.H."/>
            <person name="Choi S.S."/>
            <person name="Rih J.-K."/>
            <person name="Kim C.H."/>
            <person name="Jeong H."/>
            <person name="Hur C.G."/>
            <person name="Kim J.J."/>
        </authorList>
    </citation>
    <scope>NUCLEOTIDE SEQUENCE [LARGE SCALE GENOMIC DNA]</scope>
    <source>
        <strain>KCTC 0769BP / MBEL55E</strain>
    </source>
</reference>
<comment type="function">
    <text evidence="1">Catalyzes the formation of 6,7-dimethyl-8-ribityllumazine by condensation of 5-amino-6-(D-ribitylamino)uracil with 3,4-dihydroxy-2-butanone 4-phosphate. This is the penultimate step in the biosynthesis of riboflavin.</text>
</comment>
<comment type="catalytic activity">
    <reaction evidence="1">
        <text>(2S)-2-hydroxy-3-oxobutyl phosphate + 5-amino-6-(D-ribitylamino)uracil = 6,7-dimethyl-8-(1-D-ribityl)lumazine + phosphate + 2 H2O + H(+)</text>
        <dbReference type="Rhea" id="RHEA:26152"/>
        <dbReference type="ChEBI" id="CHEBI:15377"/>
        <dbReference type="ChEBI" id="CHEBI:15378"/>
        <dbReference type="ChEBI" id="CHEBI:15934"/>
        <dbReference type="ChEBI" id="CHEBI:43474"/>
        <dbReference type="ChEBI" id="CHEBI:58201"/>
        <dbReference type="ChEBI" id="CHEBI:58830"/>
        <dbReference type="EC" id="2.5.1.78"/>
    </reaction>
</comment>
<comment type="pathway">
    <text evidence="1">Cofactor biosynthesis; riboflavin biosynthesis; riboflavin from 2-hydroxy-3-oxobutyl phosphate and 5-amino-6-(D-ribitylamino)uracil: step 1/2.</text>
</comment>
<comment type="subunit">
    <text evidence="1">Forms an icosahedral capsid composed of 60 subunits, arranged as a dodecamer of pentamers.</text>
</comment>
<comment type="similarity">
    <text evidence="1">Belongs to the DMRL synthase family.</text>
</comment>
<evidence type="ECO:0000255" key="1">
    <source>
        <dbReference type="HAMAP-Rule" id="MF_00178"/>
    </source>
</evidence>